<comment type="subcellular location">
    <subcellularLocation>
        <location evidence="4">Membrane</location>
        <topology evidence="4">Multi-pass membrane protein</topology>
    </subcellularLocation>
    <text evidence="3">Not found in extracellular virion.</text>
</comment>
<comment type="similarity">
    <text evidence="4">Belongs to the alphaherpesvirinae HHV-1 UL43 family.</text>
</comment>
<comment type="sequence caution" evidence="4">
    <conflict type="erroneous initiation">
        <sequence resource="EMBL-CDS" id="CAA32306"/>
    </conflict>
</comment>
<keyword id="KW-0472">Membrane</keyword>
<keyword id="KW-1185">Reference proteome</keyword>
<keyword id="KW-0812">Transmembrane</keyword>
<keyword id="KW-1133">Transmembrane helix</keyword>
<feature type="chain" id="PRO_0000116081" description="Membrane protein UL43">
    <location>
        <begin position="1"/>
        <end position="417"/>
    </location>
</feature>
<feature type="transmembrane region" description="Helical" evidence="1">
    <location>
        <begin position="57"/>
        <end position="77"/>
    </location>
</feature>
<feature type="transmembrane region" description="Helical" evidence="1">
    <location>
        <begin position="90"/>
        <end position="110"/>
    </location>
</feature>
<feature type="transmembrane region" description="Helical" evidence="1">
    <location>
        <begin position="119"/>
        <end position="139"/>
    </location>
</feature>
<feature type="transmembrane region" description="Helical" evidence="1">
    <location>
        <begin position="146"/>
        <end position="166"/>
    </location>
</feature>
<feature type="transmembrane region" description="Helical" evidence="1">
    <location>
        <begin position="175"/>
        <end position="195"/>
    </location>
</feature>
<feature type="transmembrane region" description="Helical" evidence="1">
    <location>
        <begin position="263"/>
        <end position="283"/>
    </location>
</feature>
<feature type="transmembrane region" description="Helical" evidence="1">
    <location>
        <begin position="291"/>
        <end position="311"/>
    </location>
</feature>
<feature type="transmembrane region" description="Helical" evidence="1">
    <location>
        <begin position="323"/>
        <end position="343"/>
    </location>
</feature>
<feature type="transmembrane region" description="Helical" evidence="1">
    <location>
        <begin position="348"/>
        <end position="368"/>
    </location>
</feature>
<feature type="transmembrane region" description="Helical" evidence="1">
    <location>
        <begin position="389"/>
        <end position="409"/>
    </location>
</feature>
<feature type="region of interest" description="Disordered" evidence="2">
    <location>
        <begin position="1"/>
        <end position="21"/>
    </location>
</feature>
<feature type="region of interest" description="Disordered" evidence="2">
    <location>
        <begin position="217"/>
        <end position="254"/>
    </location>
</feature>
<feature type="compositionally biased region" description="Basic and acidic residues" evidence="2">
    <location>
        <begin position="221"/>
        <end position="231"/>
    </location>
</feature>
<feature type="compositionally biased region" description="Pro residues" evidence="2">
    <location>
        <begin position="232"/>
        <end position="243"/>
    </location>
</feature>
<feature type="sequence variant" description="In strain: 17 syn+ and Nonneuroinvasive mutant HF10.">
    <original>P</original>
    <variation>A</variation>
    <location>
        <position position="319"/>
    </location>
</feature>
<feature type="sequence variant" description="In strain: Nonneuroinvasive mutant HF10.">
    <original>RLA</original>
    <variation>LPVQ</variation>
    <location>
        <begin position="382"/>
        <end position="384"/>
    </location>
</feature>
<feature type="sequence variant" description="In strain: Nonneuroinvasive mutant HF10.">
    <original>V</original>
    <variation>A</variation>
    <location>
        <position position="403"/>
    </location>
</feature>
<reference key="1">
    <citation type="journal article" date="1988" name="J. Gen. Virol.">
        <title>The complete DNA sequence of the long unique region in the genome of herpes simplex virus type 1.</title>
        <authorList>
            <person name="McGeoch D.J."/>
            <person name="Dalrymple M.A."/>
            <person name="Davison A.J."/>
            <person name="Dolan A."/>
            <person name="Frame M.C."/>
            <person name="McNab D."/>
            <person name="Perry L.J."/>
            <person name="Scott J.E."/>
            <person name="Taylor P."/>
        </authorList>
    </citation>
    <scope>NUCLEOTIDE SEQUENCE [LARGE SCALE GENOMIC DNA]</scope>
</reference>
<reference key="2">
    <citation type="journal article" date="2007" name="Microbes Infect.">
        <title>Determination and analysis of the DNA sequence of highly attenuated herpes simplex virus type 1 mutant HF10, a potential oncolytic virus.</title>
        <authorList>
            <person name="Ushijima Y."/>
            <person name="Luo C."/>
            <person name="Goshima F."/>
            <person name="Yamauchi Y."/>
            <person name="Kimura H."/>
            <person name="Nishiyama Y."/>
        </authorList>
    </citation>
    <scope>NUCLEOTIDE SEQUENCE [LARGE SCALE GENOMIC DNA]</scope>
    <source>
        <strain>Nonneuroinvasive mutant HF10</strain>
    </source>
</reference>
<reference key="3">
    <citation type="submission" date="2008-12" db="EMBL/GenBank/DDBJ databases">
        <title>Herpes simplex virus type 1 bacterial artificial chromosome.</title>
        <authorList>
            <person name="Cunningham C."/>
            <person name="Davison A.J."/>
        </authorList>
    </citation>
    <scope>NUCLEOTIDE SEQUENCE [LARGE SCALE GENOMIC DNA]</scope>
    <source>
        <strain>17 syn+</strain>
    </source>
</reference>
<reference key="4">
    <citation type="journal article" date="1996" name="J. Virol.">
        <title>Characterization of the products of the U(L)43 gene of herpes simplex virus 1: potential implications for regulation of gene expression by antisense transcription.</title>
        <authorList>
            <person name="Carter K.L."/>
            <person name="Ward P.L."/>
            <person name="Roizman B."/>
        </authorList>
    </citation>
    <scope>IDENTIFICATION OF START CODON</scope>
    <source>
        <strain>F</strain>
    </source>
</reference>
<reference key="5">
    <citation type="journal article" date="2008" name="J. Virol.">
        <title>Comprehensive characterization of extracellular herpes simplex virus type 1 virions.</title>
        <authorList>
            <person name="Loret S."/>
            <person name="Guay G."/>
            <person name="Lippe R."/>
        </authorList>
    </citation>
    <scope>SUBCELLULAR LOCATION</scope>
    <source>
        <strain>F</strain>
    </source>
</reference>
<accession>P10227</accession>
<accession>B9VQH1</accession>
<organism>
    <name type="scientific">Human herpesvirus 1 (strain 17)</name>
    <name type="common">HHV-1</name>
    <name type="synonym">Human herpes simplex virus 1</name>
    <dbReference type="NCBI Taxonomy" id="10299"/>
    <lineage>
        <taxon>Viruses</taxon>
        <taxon>Duplodnaviria</taxon>
        <taxon>Heunggongvirae</taxon>
        <taxon>Peploviricota</taxon>
        <taxon>Herviviricetes</taxon>
        <taxon>Herpesvirales</taxon>
        <taxon>Orthoherpesviridae</taxon>
        <taxon>Alphaherpesvirinae</taxon>
        <taxon>Simplexvirus</taxon>
        <taxon>Simplexvirus humanalpha1</taxon>
        <taxon>Human herpesvirus 1</taxon>
    </lineage>
</organism>
<sequence>MLRNDSHRAVSPEDGQGRVDDGRPHLACVGALARGFMHIWLQAATLGFAGSVVMSRGPYANAASGAFAVGCAVLGFMRAPPPLARPTARIYAWLKLAAGGAALVLWSLGEPGTQPGAPAPGPATQCLALGAAYAALLVLADDVYPLFLLAPGPLFVGTLGMVVGGLTIGGSARYWWIGGPAAAALAAAVLAGPGATTARDCFSRACPDHRRVCVITAGESLSRRPPEDPERPGVPGPPSPPTPQRSHGPPADEVAPARVARPENVWVPVVTFLGAGALAVKTVREHARGTPGPGLPLWPQVFLGGHVAVALTELCQALPPWDLTDPLLFVHAGLQVINLGLVFRFSEVVVYAALGGAVWISLAQVLGLRRRLHRKDPGDGARLAATLRGLFFSVYALGFGVGVLLCPPGSTGGRSGD</sequence>
<name>MB43_HHV11</name>
<evidence type="ECO:0000255" key="1"/>
<evidence type="ECO:0000256" key="2">
    <source>
        <dbReference type="SAM" id="MobiDB-lite"/>
    </source>
</evidence>
<evidence type="ECO:0000269" key="3">
    <source>
    </source>
</evidence>
<evidence type="ECO:0000305" key="4"/>
<protein>
    <recommendedName>
        <fullName>Membrane protein UL43</fullName>
    </recommendedName>
</protein>
<gene>
    <name type="ORF">UL43</name>
</gene>
<organismHost>
    <name type="scientific">Homo sapiens</name>
    <name type="common">Human</name>
    <dbReference type="NCBI Taxonomy" id="9606"/>
</organismHost>
<dbReference type="EMBL" id="X14112">
    <property type="protein sequence ID" value="CAA32306.1"/>
    <property type="status" value="ALT_INIT"/>
    <property type="molecule type" value="Genomic_DNA"/>
</dbReference>
<dbReference type="EMBL" id="DQ889502">
    <property type="status" value="NOT_ANNOTATED_CDS"/>
    <property type="molecule type" value="Genomic_DNA"/>
</dbReference>
<dbReference type="EMBL" id="FJ593289">
    <property type="protein sequence ID" value="ACM62266.1"/>
    <property type="molecule type" value="Genomic_DNA"/>
</dbReference>
<dbReference type="PIR" id="G30088">
    <property type="entry name" value="WMBEF3"/>
</dbReference>
<dbReference type="RefSeq" id="YP_009137118.1">
    <property type="nucleotide sequence ID" value="NC_001806.2"/>
</dbReference>
<dbReference type="DNASU" id="2703408"/>
<dbReference type="GeneID" id="2703408"/>
<dbReference type="KEGG" id="vg:2703408"/>
<dbReference type="Proteomes" id="UP000009294">
    <property type="component" value="Segment"/>
</dbReference>
<dbReference type="Proteomes" id="UP000180652">
    <property type="component" value="Segment"/>
</dbReference>
<dbReference type="GO" id="GO:0016020">
    <property type="term" value="C:membrane"/>
    <property type="evidence" value="ECO:0007669"/>
    <property type="project" value="UniProtKB-SubCell"/>
</dbReference>
<dbReference type="GO" id="GO:0019033">
    <property type="term" value="C:viral tegument"/>
    <property type="evidence" value="ECO:0007669"/>
    <property type="project" value="InterPro"/>
</dbReference>
<dbReference type="InterPro" id="IPR007764">
    <property type="entry name" value="Herpes_UL43"/>
</dbReference>
<dbReference type="Pfam" id="PF05072">
    <property type="entry name" value="Herpes_UL43"/>
    <property type="match status" value="1"/>
</dbReference>
<proteinExistence type="inferred from homology"/>